<accession>Q57AB1</accession>
<proteinExistence type="inferred from homology"/>
<dbReference type="EC" id="2.8.4.3" evidence="1"/>
<dbReference type="EMBL" id="AE017223">
    <property type="protein sequence ID" value="AAX75423.1"/>
    <property type="molecule type" value="Genomic_DNA"/>
</dbReference>
<dbReference type="RefSeq" id="WP_002965216.1">
    <property type="nucleotide sequence ID" value="NC_006932.1"/>
</dbReference>
<dbReference type="SMR" id="Q57AB1"/>
<dbReference type="EnsemblBacteria" id="AAX75423">
    <property type="protein sequence ID" value="AAX75423"/>
    <property type="gene ID" value="BruAb1_2127"/>
</dbReference>
<dbReference type="GeneID" id="93017544"/>
<dbReference type="KEGG" id="bmb:BruAb1_2127"/>
<dbReference type="HOGENOM" id="CLU_018697_2_0_5"/>
<dbReference type="Proteomes" id="UP000000540">
    <property type="component" value="Chromosome I"/>
</dbReference>
<dbReference type="GO" id="GO:0005829">
    <property type="term" value="C:cytosol"/>
    <property type="evidence" value="ECO:0007669"/>
    <property type="project" value="TreeGrafter"/>
</dbReference>
<dbReference type="GO" id="GO:0051539">
    <property type="term" value="F:4 iron, 4 sulfur cluster binding"/>
    <property type="evidence" value="ECO:0007669"/>
    <property type="project" value="UniProtKB-UniRule"/>
</dbReference>
<dbReference type="GO" id="GO:0046872">
    <property type="term" value="F:metal ion binding"/>
    <property type="evidence" value="ECO:0007669"/>
    <property type="project" value="UniProtKB-KW"/>
</dbReference>
<dbReference type="GO" id="GO:0035597">
    <property type="term" value="F:N6-isopentenyladenosine methylthiotransferase activity"/>
    <property type="evidence" value="ECO:0007669"/>
    <property type="project" value="TreeGrafter"/>
</dbReference>
<dbReference type="CDD" id="cd01335">
    <property type="entry name" value="Radical_SAM"/>
    <property type="match status" value="1"/>
</dbReference>
<dbReference type="FunFam" id="3.40.50.12160:FF:000003">
    <property type="entry name" value="CDK5 regulatory subunit-associated protein 1"/>
    <property type="match status" value="1"/>
</dbReference>
<dbReference type="FunFam" id="3.80.30.20:FF:000001">
    <property type="entry name" value="tRNA-2-methylthio-N(6)-dimethylallyladenosine synthase 2"/>
    <property type="match status" value="1"/>
</dbReference>
<dbReference type="Gene3D" id="3.40.50.12160">
    <property type="entry name" value="Methylthiotransferase, N-terminal domain"/>
    <property type="match status" value="1"/>
</dbReference>
<dbReference type="Gene3D" id="3.80.30.20">
    <property type="entry name" value="tm_1862 like domain"/>
    <property type="match status" value="1"/>
</dbReference>
<dbReference type="HAMAP" id="MF_01864">
    <property type="entry name" value="tRNA_metthiotr_MiaB"/>
    <property type="match status" value="1"/>
</dbReference>
<dbReference type="InterPro" id="IPR006638">
    <property type="entry name" value="Elp3/MiaA/NifB-like_rSAM"/>
</dbReference>
<dbReference type="InterPro" id="IPR005839">
    <property type="entry name" value="Methylthiotransferase"/>
</dbReference>
<dbReference type="InterPro" id="IPR020612">
    <property type="entry name" value="Methylthiotransferase_CS"/>
</dbReference>
<dbReference type="InterPro" id="IPR013848">
    <property type="entry name" value="Methylthiotransferase_N"/>
</dbReference>
<dbReference type="InterPro" id="IPR038135">
    <property type="entry name" value="Methylthiotransferase_N_sf"/>
</dbReference>
<dbReference type="InterPro" id="IPR006463">
    <property type="entry name" value="MiaB_methiolase"/>
</dbReference>
<dbReference type="InterPro" id="IPR007197">
    <property type="entry name" value="rSAM"/>
</dbReference>
<dbReference type="InterPro" id="IPR023404">
    <property type="entry name" value="rSAM_horseshoe"/>
</dbReference>
<dbReference type="InterPro" id="IPR002792">
    <property type="entry name" value="TRAM_dom"/>
</dbReference>
<dbReference type="NCBIfam" id="TIGR01574">
    <property type="entry name" value="miaB-methiolase"/>
    <property type="match status" value="1"/>
</dbReference>
<dbReference type="NCBIfam" id="TIGR00089">
    <property type="entry name" value="MiaB/RimO family radical SAM methylthiotransferase"/>
    <property type="match status" value="1"/>
</dbReference>
<dbReference type="PANTHER" id="PTHR43020">
    <property type="entry name" value="CDK5 REGULATORY SUBUNIT-ASSOCIATED PROTEIN 1"/>
    <property type="match status" value="1"/>
</dbReference>
<dbReference type="PANTHER" id="PTHR43020:SF2">
    <property type="entry name" value="MITOCHONDRIAL TRNA METHYLTHIOTRANSFERASE CDK5RAP1"/>
    <property type="match status" value="1"/>
</dbReference>
<dbReference type="Pfam" id="PF04055">
    <property type="entry name" value="Radical_SAM"/>
    <property type="match status" value="1"/>
</dbReference>
<dbReference type="Pfam" id="PF01938">
    <property type="entry name" value="TRAM"/>
    <property type="match status" value="1"/>
</dbReference>
<dbReference type="Pfam" id="PF00919">
    <property type="entry name" value="UPF0004"/>
    <property type="match status" value="1"/>
</dbReference>
<dbReference type="SFLD" id="SFLDF00273">
    <property type="entry name" value="(dimethylallyl)adenosine_tRNA"/>
    <property type="match status" value="1"/>
</dbReference>
<dbReference type="SFLD" id="SFLDG01082">
    <property type="entry name" value="B12-binding_domain_containing"/>
    <property type="match status" value="1"/>
</dbReference>
<dbReference type="SFLD" id="SFLDS00029">
    <property type="entry name" value="Radical_SAM"/>
    <property type="match status" value="1"/>
</dbReference>
<dbReference type="SMART" id="SM00729">
    <property type="entry name" value="Elp3"/>
    <property type="match status" value="1"/>
</dbReference>
<dbReference type="SUPFAM" id="SSF102114">
    <property type="entry name" value="Radical SAM enzymes"/>
    <property type="match status" value="1"/>
</dbReference>
<dbReference type="PROSITE" id="PS51449">
    <property type="entry name" value="MTTASE_N"/>
    <property type="match status" value="1"/>
</dbReference>
<dbReference type="PROSITE" id="PS01278">
    <property type="entry name" value="MTTASE_RADICAL"/>
    <property type="match status" value="1"/>
</dbReference>
<dbReference type="PROSITE" id="PS51918">
    <property type="entry name" value="RADICAL_SAM"/>
    <property type="match status" value="1"/>
</dbReference>
<dbReference type="PROSITE" id="PS50926">
    <property type="entry name" value="TRAM"/>
    <property type="match status" value="1"/>
</dbReference>
<name>MIAB_BRUAB</name>
<keyword id="KW-0004">4Fe-4S</keyword>
<keyword id="KW-0963">Cytoplasm</keyword>
<keyword id="KW-0408">Iron</keyword>
<keyword id="KW-0411">Iron-sulfur</keyword>
<keyword id="KW-0479">Metal-binding</keyword>
<keyword id="KW-0949">S-adenosyl-L-methionine</keyword>
<keyword id="KW-0808">Transferase</keyword>
<keyword id="KW-0819">tRNA processing</keyword>
<feature type="chain" id="PRO_0000374163" description="tRNA-2-methylthio-N(6)-dimethylallyladenosine synthase">
    <location>
        <begin position="1"/>
        <end position="467"/>
    </location>
</feature>
<feature type="domain" description="MTTase N-terminal" evidence="1">
    <location>
        <begin position="23"/>
        <end position="143"/>
    </location>
</feature>
<feature type="domain" description="Radical SAM core" evidence="2">
    <location>
        <begin position="170"/>
        <end position="402"/>
    </location>
</feature>
<feature type="domain" description="TRAM" evidence="1">
    <location>
        <begin position="405"/>
        <end position="467"/>
    </location>
</feature>
<feature type="region of interest" description="Disordered" evidence="3">
    <location>
        <begin position="1"/>
        <end position="20"/>
    </location>
</feature>
<feature type="binding site" evidence="1">
    <location>
        <position position="32"/>
    </location>
    <ligand>
        <name>[4Fe-4S] cluster</name>
        <dbReference type="ChEBI" id="CHEBI:49883"/>
        <label>1</label>
    </ligand>
</feature>
<feature type="binding site" evidence="1">
    <location>
        <position position="68"/>
    </location>
    <ligand>
        <name>[4Fe-4S] cluster</name>
        <dbReference type="ChEBI" id="CHEBI:49883"/>
        <label>1</label>
    </ligand>
</feature>
<feature type="binding site" evidence="1">
    <location>
        <position position="106"/>
    </location>
    <ligand>
        <name>[4Fe-4S] cluster</name>
        <dbReference type="ChEBI" id="CHEBI:49883"/>
        <label>1</label>
    </ligand>
</feature>
<feature type="binding site" evidence="1">
    <location>
        <position position="184"/>
    </location>
    <ligand>
        <name>[4Fe-4S] cluster</name>
        <dbReference type="ChEBI" id="CHEBI:49883"/>
        <label>2</label>
        <note>4Fe-4S-S-AdoMet</note>
    </ligand>
</feature>
<feature type="binding site" evidence="1">
    <location>
        <position position="188"/>
    </location>
    <ligand>
        <name>[4Fe-4S] cluster</name>
        <dbReference type="ChEBI" id="CHEBI:49883"/>
        <label>2</label>
        <note>4Fe-4S-S-AdoMet</note>
    </ligand>
</feature>
<feature type="binding site" evidence="1">
    <location>
        <position position="191"/>
    </location>
    <ligand>
        <name>[4Fe-4S] cluster</name>
        <dbReference type="ChEBI" id="CHEBI:49883"/>
        <label>2</label>
        <note>4Fe-4S-S-AdoMet</note>
    </ligand>
</feature>
<reference key="1">
    <citation type="journal article" date="2005" name="J. Bacteriol.">
        <title>Completion of the genome sequence of Brucella abortus and comparison to the highly similar genomes of Brucella melitensis and Brucella suis.</title>
        <authorList>
            <person name="Halling S.M."/>
            <person name="Peterson-Burch B.D."/>
            <person name="Bricker B.J."/>
            <person name="Zuerner R.L."/>
            <person name="Qing Z."/>
            <person name="Li L.-L."/>
            <person name="Kapur V."/>
            <person name="Alt D.P."/>
            <person name="Olsen S.C."/>
        </authorList>
    </citation>
    <scope>NUCLEOTIDE SEQUENCE [LARGE SCALE GENOMIC DNA]</scope>
    <source>
        <strain>9-941</strain>
    </source>
</reference>
<gene>
    <name evidence="1" type="primary">miaB</name>
    <name type="ordered locus">BruAb1_2127</name>
</gene>
<evidence type="ECO:0000255" key="1">
    <source>
        <dbReference type="HAMAP-Rule" id="MF_01864"/>
    </source>
</evidence>
<evidence type="ECO:0000255" key="2">
    <source>
        <dbReference type="PROSITE-ProRule" id="PRU01266"/>
    </source>
</evidence>
<evidence type="ECO:0000256" key="3">
    <source>
        <dbReference type="SAM" id="MobiDB-lite"/>
    </source>
</evidence>
<sequence length="467" mass="52337">MSDDTTQIEPAMAQETSPRANTRKVFVKTYGCQMNVYDSQRMADSLAAEGYVATDTPDDADLVLLNTCHIREKASEKLYSALGRLRKMRDARAADGKELTIGVAGCVAQAEGQEILRRAPNVDLVIGPQTYHRLPNALARVRGGEKVVETDYAIEDKFEHLPAPRREETRKRGVSAFLTVQEGCDKFCTFCVVPYTRGSEVSRSVKQIVAEAERLADSGVRELTLLGQNVNAWHGEGEDGREWGLGELLFRLARIPGIARLRYTTSHPRDMDDSLIAAHRDLRQLMPYLHLPVQSGSDRILKAMNRRHKADEYLRLIERIRNVRPDMALSGDFIVGFPGETDQDFEDTMQLVRDVNYAQAYSFKYSPRPGTPGADLDDHVEEAVKDERLQRLQALLSAQQYAFQDSMIGRKMDVLLEKPGREAGQMVGRSPWLLPVIIDDNKDRVGDIIHVKIVSTGTNSLIAQKLA</sequence>
<protein>
    <recommendedName>
        <fullName evidence="1">tRNA-2-methylthio-N(6)-dimethylallyladenosine synthase</fullName>
        <ecNumber evidence="1">2.8.4.3</ecNumber>
    </recommendedName>
    <alternativeName>
        <fullName evidence="1">(Dimethylallyl)adenosine tRNA methylthiotransferase MiaB</fullName>
    </alternativeName>
    <alternativeName>
        <fullName evidence="1">tRNA-i(6)A37 methylthiotransferase</fullName>
    </alternativeName>
</protein>
<comment type="function">
    <text evidence="1">Catalyzes the methylthiolation of N6-(dimethylallyl)adenosine (i(6)A), leading to the formation of 2-methylthio-N6-(dimethylallyl)adenosine (ms(2)i(6)A) at position 37 in tRNAs that read codons beginning with uridine.</text>
</comment>
<comment type="catalytic activity">
    <reaction evidence="1">
        <text>N(6)-dimethylallyladenosine(37) in tRNA + (sulfur carrier)-SH + AH2 + 2 S-adenosyl-L-methionine = 2-methylsulfanyl-N(6)-dimethylallyladenosine(37) in tRNA + (sulfur carrier)-H + 5'-deoxyadenosine + L-methionine + A + S-adenosyl-L-homocysteine + 2 H(+)</text>
        <dbReference type="Rhea" id="RHEA:37067"/>
        <dbReference type="Rhea" id="RHEA-COMP:10375"/>
        <dbReference type="Rhea" id="RHEA-COMP:10376"/>
        <dbReference type="Rhea" id="RHEA-COMP:14737"/>
        <dbReference type="Rhea" id="RHEA-COMP:14739"/>
        <dbReference type="ChEBI" id="CHEBI:13193"/>
        <dbReference type="ChEBI" id="CHEBI:15378"/>
        <dbReference type="ChEBI" id="CHEBI:17319"/>
        <dbReference type="ChEBI" id="CHEBI:17499"/>
        <dbReference type="ChEBI" id="CHEBI:29917"/>
        <dbReference type="ChEBI" id="CHEBI:57844"/>
        <dbReference type="ChEBI" id="CHEBI:57856"/>
        <dbReference type="ChEBI" id="CHEBI:59789"/>
        <dbReference type="ChEBI" id="CHEBI:64428"/>
        <dbReference type="ChEBI" id="CHEBI:74415"/>
        <dbReference type="ChEBI" id="CHEBI:74417"/>
        <dbReference type="EC" id="2.8.4.3"/>
    </reaction>
</comment>
<comment type="cofactor">
    <cofactor evidence="1">
        <name>[4Fe-4S] cluster</name>
        <dbReference type="ChEBI" id="CHEBI:49883"/>
    </cofactor>
    <text evidence="1">Binds 2 [4Fe-4S] clusters. One cluster is coordinated with 3 cysteines and an exchangeable S-adenosyl-L-methionine.</text>
</comment>
<comment type="subunit">
    <text evidence="1">Monomer.</text>
</comment>
<comment type="subcellular location">
    <subcellularLocation>
        <location evidence="1">Cytoplasm</location>
    </subcellularLocation>
</comment>
<comment type="similarity">
    <text evidence="1">Belongs to the methylthiotransferase family. MiaB subfamily.</text>
</comment>
<organism>
    <name type="scientific">Brucella abortus biovar 1 (strain 9-941)</name>
    <dbReference type="NCBI Taxonomy" id="262698"/>
    <lineage>
        <taxon>Bacteria</taxon>
        <taxon>Pseudomonadati</taxon>
        <taxon>Pseudomonadota</taxon>
        <taxon>Alphaproteobacteria</taxon>
        <taxon>Hyphomicrobiales</taxon>
        <taxon>Brucellaceae</taxon>
        <taxon>Brucella/Ochrobactrum group</taxon>
        <taxon>Brucella</taxon>
    </lineage>
</organism>